<accession>A6KXG8</accession>
<evidence type="ECO:0000255" key="1">
    <source>
        <dbReference type="HAMAP-Rule" id="MF_00064"/>
    </source>
</evidence>
<reference key="1">
    <citation type="journal article" date="2007" name="PLoS Biol.">
        <title>Evolution of symbiotic bacteria in the distal human intestine.</title>
        <authorList>
            <person name="Xu J."/>
            <person name="Mahowald M.A."/>
            <person name="Ley R.E."/>
            <person name="Lozupone C.A."/>
            <person name="Hamady M."/>
            <person name="Martens E.C."/>
            <person name="Henrissat B."/>
            <person name="Coutinho P.M."/>
            <person name="Minx P."/>
            <person name="Latreille P."/>
            <person name="Cordum H."/>
            <person name="Van Brunt A."/>
            <person name="Kim K."/>
            <person name="Fulton R.S."/>
            <person name="Fulton L.A."/>
            <person name="Clifton S.W."/>
            <person name="Wilson R.K."/>
            <person name="Knight R.D."/>
            <person name="Gordon J.I."/>
        </authorList>
    </citation>
    <scope>NUCLEOTIDE SEQUENCE [LARGE SCALE GENOMIC DNA]</scope>
    <source>
        <strain>ATCC 8482 / DSM 1447 / JCM 5826 / CCUG 4940 / NBRC 14291 / NCTC 11154</strain>
    </source>
</reference>
<dbReference type="EC" id="2.7.7.4" evidence="1"/>
<dbReference type="EMBL" id="CP000139">
    <property type="protein sequence ID" value="ABR38132.1"/>
    <property type="molecule type" value="Genomic_DNA"/>
</dbReference>
<dbReference type="RefSeq" id="WP_005840186.1">
    <property type="nucleotide sequence ID" value="NZ_JANSWM010000030.1"/>
</dbReference>
<dbReference type="SMR" id="A6KXG8"/>
<dbReference type="STRING" id="435590.BVU_0417"/>
<dbReference type="PaxDb" id="435590-BVU_0417"/>
<dbReference type="GeneID" id="60060978"/>
<dbReference type="KEGG" id="bvu:BVU_0417"/>
<dbReference type="eggNOG" id="COG0175">
    <property type="taxonomic scope" value="Bacteria"/>
</dbReference>
<dbReference type="HOGENOM" id="CLU_043026_0_0_10"/>
<dbReference type="BioCyc" id="BVUL435590:G1G59-437-MONOMER"/>
<dbReference type="UniPathway" id="UPA00140">
    <property type="reaction ID" value="UER00204"/>
</dbReference>
<dbReference type="Proteomes" id="UP000002861">
    <property type="component" value="Chromosome"/>
</dbReference>
<dbReference type="GO" id="GO:0005524">
    <property type="term" value="F:ATP binding"/>
    <property type="evidence" value="ECO:0007669"/>
    <property type="project" value="UniProtKB-KW"/>
</dbReference>
<dbReference type="GO" id="GO:0004781">
    <property type="term" value="F:sulfate adenylyltransferase (ATP) activity"/>
    <property type="evidence" value="ECO:0007669"/>
    <property type="project" value="UniProtKB-UniRule"/>
</dbReference>
<dbReference type="GO" id="GO:0070814">
    <property type="term" value="P:hydrogen sulfide biosynthetic process"/>
    <property type="evidence" value="ECO:0007669"/>
    <property type="project" value="UniProtKB-UniRule"/>
</dbReference>
<dbReference type="GO" id="GO:0000103">
    <property type="term" value="P:sulfate assimilation"/>
    <property type="evidence" value="ECO:0007669"/>
    <property type="project" value="UniProtKB-UniRule"/>
</dbReference>
<dbReference type="CDD" id="cd23946">
    <property type="entry name" value="Sulfate_adenylyltransferase_2"/>
    <property type="match status" value="1"/>
</dbReference>
<dbReference type="FunFam" id="3.40.50.620:FF:000002">
    <property type="entry name" value="Sulfate adenylyltransferase subunit 2"/>
    <property type="match status" value="1"/>
</dbReference>
<dbReference type="Gene3D" id="3.40.50.620">
    <property type="entry name" value="HUPs"/>
    <property type="match status" value="1"/>
</dbReference>
<dbReference type="HAMAP" id="MF_00064">
    <property type="entry name" value="Sulf_adenylyltr_sub2"/>
    <property type="match status" value="1"/>
</dbReference>
<dbReference type="InterPro" id="IPR002500">
    <property type="entry name" value="PAPS_reduct_dom"/>
</dbReference>
<dbReference type="InterPro" id="IPR014729">
    <property type="entry name" value="Rossmann-like_a/b/a_fold"/>
</dbReference>
<dbReference type="InterPro" id="IPR011784">
    <property type="entry name" value="SO4_adenylTrfase_ssu"/>
</dbReference>
<dbReference type="InterPro" id="IPR050128">
    <property type="entry name" value="Sulfate_adenylyltrnsfr_sub2"/>
</dbReference>
<dbReference type="NCBIfam" id="TIGR02039">
    <property type="entry name" value="CysD"/>
    <property type="match status" value="1"/>
</dbReference>
<dbReference type="NCBIfam" id="NF003587">
    <property type="entry name" value="PRK05253.1"/>
    <property type="match status" value="1"/>
</dbReference>
<dbReference type="NCBIfam" id="NF009214">
    <property type="entry name" value="PRK12563.1"/>
    <property type="match status" value="1"/>
</dbReference>
<dbReference type="PANTHER" id="PTHR43196">
    <property type="entry name" value="SULFATE ADENYLYLTRANSFERASE SUBUNIT 2"/>
    <property type="match status" value="1"/>
</dbReference>
<dbReference type="PANTHER" id="PTHR43196:SF1">
    <property type="entry name" value="SULFATE ADENYLYLTRANSFERASE SUBUNIT 2"/>
    <property type="match status" value="1"/>
</dbReference>
<dbReference type="Pfam" id="PF01507">
    <property type="entry name" value="PAPS_reduct"/>
    <property type="match status" value="1"/>
</dbReference>
<dbReference type="PIRSF" id="PIRSF002936">
    <property type="entry name" value="CysDAde_trans"/>
    <property type="match status" value="1"/>
</dbReference>
<dbReference type="SUPFAM" id="SSF52402">
    <property type="entry name" value="Adenine nucleotide alpha hydrolases-like"/>
    <property type="match status" value="1"/>
</dbReference>
<feature type="chain" id="PRO_1000092200" description="Sulfate adenylyltransferase subunit 2">
    <location>
        <begin position="1"/>
        <end position="303"/>
    </location>
</feature>
<gene>
    <name evidence="1" type="primary">cysD</name>
    <name type="ordered locus">BVU_0417</name>
</gene>
<name>CYSD_PHOV8</name>
<comment type="function">
    <text evidence="1">With CysN forms the ATP sulfurylase (ATPS) that catalyzes the adenylation of sulfate producing adenosine 5'-phosphosulfate (APS) and diphosphate, the first enzymatic step in sulfur assimilation pathway. APS synthesis involves the formation of a high-energy phosphoric-sulfuric acid anhydride bond driven by GTP hydrolysis by CysN coupled to ATP hydrolysis by CysD.</text>
</comment>
<comment type="catalytic activity">
    <reaction evidence="1">
        <text>sulfate + ATP + H(+) = adenosine 5'-phosphosulfate + diphosphate</text>
        <dbReference type="Rhea" id="RHEA:18133"/>
        <dbReference type="ChEBI" id="CHEBI:15378"/>
        <dbReference type="ChEBI" id="CHEBI:16189"/>
        <dbReference type="ChEBI" id="CHEBI:30616"/>
        <dbReference type="ChEBI" id="CHEBI:33019"/>
        <dbReference type="ChEBI" id="CHEBI:58243"/>
        <dbReference type="EC" id="2.7.7.4"/>
    </reaction>
</comment>
<comment type="pathway">
    <text evidence="1">Sulfur metabolism; hydrogen sulfide biosynthesis; sulfite from sulfate: step 1/3.</text>
</comment>
<comment type="subunit">
    <text evidence="1">Heterodimer composed of CysD, the smaller subunit, and CysN.</text>
</comment>
<comment type="similarity">
    <text evidence="1">Belongs to the PAPS reductase family. CysD subfamily.</text>
</comment>
<sequence>MEENYKLSHLRELEAESIHIIREVAAEFENPVMLYSIGKDSSVMVRLAEKAFYPGKVPFPLMHIDSKWKFREMIEFRDQYAKEHGWNLIVESNMEAFNAGVGPFTHGSKVHTDLMKTQALLHGLDKYRFDAAFGGARRDEEKSRAKERIFSFRDRFHQWDPKNQRPELWDIYNAKIHKGESIRVFPLSNWTELDIWQYIRLENIPIVPLYFAKERPVVNIDGNLIMADDDRLPEEYRDRIEMKKVRFRTLGCWPLTGAVESDADTIEKIVEEMMTTTKSERTTRVIDFDQDASMEQKKREGYF</sequence>
<keyword id="KW-0067">ATP-binding</keyword>
<keyword id="KW-0547">Nucleotide-binding</keyword>
<keyword id="KW-0548">Nucleotidyltransferase</keyword>
<keyword id="KW-0808">Transferase</keyword>
<proteinExistence type="inferred from homology"/>
<protein>
    <recommendedName>
        <fullName evidence="1">Sulfate adenylyltransferase subunit 2</fullName>
        <ecNumber evidence="1">2.7.7.4</ecNumber>
    </recommendedName>
    <alternativeName>
        <fullName evidence="1">ATP-sulfurylase small subunit</fullName>
    </alternativeName>
    <alternativeName>
        <fullName evidence="1">Sulfate adenylate transferase</fullName>
        <shortName evidence="1">SAT</shortName>
    </alternativeName>
</protein>
<organism>
    <name type="scientific">Phocaeicola vulgatus (strain ATCC 8482 / DSM 1447 / JCM 5826 / CCUG 4940 / NBRC 14291 / NCTC 11154)</name>
    <name type="common">Bacteroides vulgatus</name>
    <dbReference type="NCBI Taxonomy" id="435590"/>
    <lineage>
        <taxon>Bacteria</taxon>
        <taxon>Pseudomonadati</taxon>
        <taxon>Bacteroidota</taxon>
        <taxon>Bacteroidia</taxon>
        <taxon>Bacteroidales</taxon>
        <taxon>Bacteroidaceae</taxon>
        <taxon>Phocaeicola</taxon>
    </lineage>
</organism>